<proteinExistence type="inferred from homology"/>
<reference key="1">
    <citation type="submission" date="2006-09" db="EMBL/GenBank/DDBJ databases">
        <title>Complete sequence of Rhodopseudomonas palustris BisA53.</title>
        <authorList>
            <consortium name="US DOE Joint Genome Institute"/>
            <person name="Copeland A."/>
            <person name="Lucas S."/>
            <person name="Lapidus A."/>
            <person name="Barry K."/>
            <person name="Detter J.C."/>
            <person name="Glavina del Rio T."/>
            <person name="Hammon N."/>
            <person name="Israni S."/>
            <person name="Dalin E."/>
            <person name="Tice H."/>
            <person name="Pitluck S."/>
            <person name="Chain P."/>
            <person name="Malfatti S."/>
            <person name="Shin M."/>
            <person name="Vergez L."/>
            <person name="Schmutz J."/>
            <person name="Larimer F."/>
            <person name="Land M."/>
            <person name="Hauser L."/>
            <person name="Pelletier D.A."/>
            <person name="Kyrpides N."/>
            <person name="Kim E."/>
            <person name="Harwood C.S."/>
            <person name="Oda Y."/>
            <person name="Richardson P."/>
        </authorList>
    </citation>
    <scope>NUCLEOTIDE SEQUENCE [LARGE SCALE GENOMIC DNA]</scope>
    <source>
        <strain>BisA53</strain>
    </source>
</reference>
<name>QUEC_RHOP5</name>
<comment type="function">
    <text evidence="1">Catalyzes the ATP-dependent conversion of 7-carboxy-7-deazaguanine (CDG) to 7-cyano-7-deazaguanine (preQ(0)).</text>
</comment>
<comment type="catalytic activity">
    <reaction evidence="1">
        <text>7-carboxy-7-deazaguanine + NH4(+) + ATP = 7-cyano-7-deazaguanine + ADP + phosphate + H2O + H(+)</text>
        <dbReference type="Rhea" id="RHEA:27982"/>
        <dbReference type="ChEBI" id="CHEBI:15377"/>
        <dbReference type="ChEBI" id="CHEBI:15378"/>
        <dbReference type="ChEBI" id="CHEBI:28938"/>
        <dbReference type="ChEBI" id="CHEBI:30616"/>
        <dbReference type="ChEBI" id="CHEBI:43474"/>
        <dbReference type="ChEBI" id="CHEBI:45075"/>
        <dbReference type="ChEBI" id="CHEBI:61036"/>
        <dbReference type="ChEBI" id="CHEBI:456216"/>
        <dbReference type="EC" id="6.3.4.20"/>
    </reaction>
</comment>
<comment type="cofactor">
    <cofactor evidence="1">
        <name>Zn(2+)</name>
        <dbReference type="ChEBI" id="CHEBI:29105"/>
    </cofactor>
    <text evidence="1">Binds 1 zinc ion per subunit.</text>
</comment>
<comment type="pathway">
    <text evidence="1">Purine metabolism; 7-cyano-7-deazaguanine biosynthesis.</text>
</comment>
<comment type="similarity">
    <text evidence="1">Belongs to the QueC family.</text>
</comment>
<organism>
    <name type="scientific">Rhodopseudomonas palustris (strain BisA53)</name>
    <dbReference type="NCBI Taxonomy" id="316055"/>
    <lineage>
        <taxon>Bacteria</taxon>
        <taxon>Pseudomonadati</taxon>
        <taxon>Pseudomonadota</taxon>
        <taxon>Alphaproteobacteria</taxon>
        <taxon>Hyphomicrobiales</taxon>
        <taxon>Nitrobacteraceae</taxon>
        <taxon>Rhodopseudomonas</taxon>
    </lineage>
</organism>
<evidence type="ECO:0000255" key="1">
    <source>
        <dbReference type="HAMAP-Rule" id="MF_01633"/>
    </source>
</evidence>
<dbReference type="EC" id="6.3.4.20" evidence="1"/>
<dbReference type="EMBL" id="CP000463">
    <property type="protein sequence ID" value="ABJ06821.1"/>
    <property type="molecule type" value="Genomic_DNA"/>
</dbReference>
<dbReference type="SMR" id="Q07ML3"/>
<dbReference type="STRING" id="316055.RPE_2884"/>
<dbReference type="KEGG" id="rpe:RPE_2884"/>
<dbReference type="eggNOG" id="COG0603">
    <property type="taxonomic scope" value="Bacteria"/>
</dbReference>
<dbReference type="HOGENOM" id="CLU_081854_0_0_5"/>
<dbReference type="OrthoDB" id="9789567at2"/>
<dbReference type="UniPathway" id="UPA00391"/>
<dbReference type="GO" id="GO:0005524">
    <property type="term" value="F:ATP binding"/>
    <property type="evidence" value="ECO:0007669"/>
    <property type="project" value="UniProtKB-UniRule"/>
</dbReference>
<dbReference type="GO" id="GO:0016879">
    <property type="term" value="F:ligase activity, forming carbon-nitrogen bonds"/>
    <property type="evidence" value="ECO:0007669"/>
    <property type="project" value="UniProtKB-UniRule"/>
</dbReference>
<dbReference type="GO" id="GO:0008270">
    <property type="term" value="F:zinc ion binding"/>
    <property type="evidence" value="ECO:0007669"/>
    <property type="project" value="UniProtKB-UniRule"/>
</dbReference>
<dbReference type="GO" id="GO:0008616">
    <property type="term" value="P:queuosine biosynthetic process"/>
    <property type="evidence" value="ECO:0007669"/>
    <property type="project" value="UniProtKB-UniRule"/>
</dbReference>
<dbReference type="CDD" id="cd01995">
    <property type="entry name" value="QueC-like"/>
    <property type="match status" value="1"/>
</dbReference>
<dbReference type="Gene3D" id="3.40.50.620">
    <property type="entry name" value="HUPs"/>
    <property type="match status" value="1"/>
</dbReference>
<dbReference type="HAMAP" id="MF_01633">
    <property type="entry name" value="QueC"/>
    <property type="match status" value="1"/>
</dbReference>
<dbReference type="InterPro" id="IPR018317">
    <property type="entry name" value="QueC"/>
</dbReference>
<dbReference type="InterPro" id="IPR014729">
    <property type="entry name" value="Rossmann-like_a/b/a_fold"/>
</dbReference>
<dbReference type="NCBIfam" id="TIGR00364">
    <property type="entry name" value="7-cyano-7-deazaguanine synthase QueC"/>
    <property type="match status" value="1"/>
</dbReference>
<dbReference type="PANTHER" id="PTHR42914">
    <property type="entry name" value="7-CYANO-7-DEAZAGUANINE SYNTHASE"/>
    <property type="match status" value="1"/>
</dbReference>
<dbReference type="PANTHER" id="PTHR42914:SF1">
    <property type="entry name" value="7-CYANO-7-DEAZAGUANINE SYNTHASE"/>
    <property type="match status" value="1"/>
</dbReference>
<dbReference type="Pfam" id="PF06508">
    <property type="entry name" value="QueC"/>
    <property type="match status" value="1"/>
</dbReference>
<dbReference type="PIRSF" id="PIRSF006293">
    <property type="entry name" value="ExsB"/>
    <property type="match status" value="1"/>
</dbReference>
<dbReference type="SUPFAM" id="SSF52402">
    <property type="entry name" value="Adenine nucleotide alpha hydrolases-like"/>
    <property type="match status" value="1"/>
</dbReference>
<accession>Q07ML3</accession>
<keyword id="KW-0067">ATP-binding</keyword>
<keyword id="KW-0436">Ligase</keyword>
<keyword id="KW-0479">Metal-binding</keyword>
<keyword id="KW-0547">Nucleotide-binding</keyword>
<keyword id="KW-0671">Queuosine biosynthesis</keyword>
<keyword id="KW-0862">Zinc</keyword>
<feature type="chain" id="PRO_1000069792" description="7-cyano-7-deazaguanine synthase">
    <location>
        <begin position="1"/>
        <end position="242"/>
    </location>
</feature>
<feature type="binding site" evidence="1">
    <location>
        <begin position="14"/>
        <end position="24"/>
    </location>
    <ligand>
        <name>ATP</name>
        <dbReference type="ChEBI" id="CHEBI:30616"/>
    </ligand>
</feature>
<feature type="binding site" evidence="1">
    <location>
        <position position="202"/>
    </location>
    <ligand>
        <name>Zn(2+)</name>
        <dbReference type="ChEBI" id="CHEBI:29105"/>
    </ligand>
</feature>
<feature type="binding site" evidence="1">
    <location>
        <position position="217"/>
    </location>
    <ligand>
        <name>Zn(2+)</name>
        <dbReference type="ChEBI" id="CHEBI:29105"/>
    </ligand>
</feature>
<feature type="binding site" evidence="1">
    <location>
        <position position="220"/>
    </location>
    <ligand>
        <name>Zn(2+)</name>
        <dbReference type="ChEBI" id="CHEBI:29105"/>
    </ligand>
</feature>
<feature type="binding site" evidence="1">
    <location>
        <position position="223"/>
    </location>
    <ligand>
        <name>Zn(2+)</name>
        <dbReference type="ChEBI" id="CHEBI:29105"/>
    </ligand>
</feature>
<sequence>MSQILHPDAALVLFSGGQDSATCLAWALDRFARVETIGFDYGQRHLVELDSRAKLLDGLKTLKPEWVAKLGETHTLAIPTLAQVSDTALTRDVAIAMGADGLPNTFVPGRNLIFLTFAAALAYRRGIGAIIGGMCETDYSGYPDCRDATIKALGEAINLGMATQFELHTPLMWLDKAATWGLAQTLGGERLVDLIREHSHTCYLGERGARHDWGFGCGECPACQLRAKGWREFSAQRDARQG</sequence>
<gene>
    <name evidence="1" type="primary">queC</name>
    <name type="ordered locus">RPE_2884</name>
</gene>
<protein>
    <recommendedName>
        <fullName evidence="1">7-cyano-7-deazaguanine synthase</fullName>
        <ecNumber evidence="1">6.3.4.20</ecNumber>
    </recommendedName>
    <alternativeName>
        <fullName evidence="1">7-cyano-7-carbaguanine synthase</fullName>
    </alternativeName>
    <alternativeName>
        <fullName evidence="1">PreQ(0) synthase</fullName>
    </alternativeName>
    <alternativeName>
        <fullName evidence="1">Queuosine biosynthesis protein QueC</fullName>
    </alternativeName>
</protein>